<keyword id="KW-0002">3D-structure</keyword>
<keyword id="KW-1064">Adaptive immunity</keyword>
<keyword id="KW-0903">Direct protein sequencing</keyword>
<keyword id="KW-1015">Disulfide bond</keyword>
<keyword id="KW-0391">Immunity</keyword>
<keyword id="KW-1280">Immunoglobulin</keyword>
<keyword id="KW-1185">Reference proteome</keyword>
<keyword id="KW-0732">Signal</keyword>
<organism>
    <name type="scientific">Mus musculus</name>
    <name type="common">Mouse</name>
    <dbReference type="NCBI Taxonomy" id="10090"/>
    <lineage>
        <taxon>Eukaryota</taxon>
        <taxon>Metazoa</taxon>
        <taxon>Chordata</taxon>
        <taxon>Craniata</taxon>
        <taxon>Vertebrata</taxon>
        <taxon>Euteleostomi</taxon>
        <taxon>Mammalia</taxon>
        <taxon>Eutheria</taxon>
        <taxon>Euarchontoglires</taxon>
        <taxon>Glires</taxon>
        <taxon>Rodentia</taxon>
        <taxon>Myomorpha</taxon>
        <taxon>Muroidea</taxon>
        <taxon>Muridae</taxon>
        <taxon>Murinae</taxon>
        <taxon>Mus</taxon>
        <taxon>Mus</taxon>
    </lineage>
</organism>
<name>KV3A9_MOUSE</name>
<feature type="signal peptide" evidence="2">
    <location>
        <begin position="1"/>
        <end position="20"/>
    </location>
</feature>
<feature type="chain" id="PRO_0000015187" description="Ig kappa chain V-III region MOPC 63">
    <location>
        <begin position="21"/>
        <end position="131"/>
    </location>
</feature>
<feature type="region of interest" description="Framework-1">
    <location>
        <begin position="21"/>
        <end position="43"/>
    </location>
</feature>
<feature type="region of interest" description="Complementarity-determining-1">
    <location>
        <begin position="44"/>
        <end position="58"/>
    </location>
</feature>
<feature type="region of interest" description="Framework-2">
    <location>
        <begin position="59"/>
        <end position="73"/>
    </location>
</feature>
<feature type="region of interest" description="Complementarity-determining-2">
    <location>
        <begin position="74"/>
        <end position="80"/>
    </location>
</feature>
<feature type="region of interest" description="Framework-3">
    <location>
        <begin position="81"/>
        <end position="112"/>
    </location>
</feature>
<feature type="region of interest" description="Complementarity-determining-3">
    <location>
        <begin position="113"/>
        <end position="121"/>
    </location>
</feature>
<feature type="region of interest" description="Framework-4">
    <location>
        <begin position="122"/>
        <end position="131"/>
    </location>
</feature>
<feature type="disulfide bond" evidence="1">
    <location>
        <begin position="43"/>
        <end position="112"/>
    </location>
</feature>
<feature type="non-terminal residue">
    <location>
        <position position="131"/>
    </location>
</feature>
<feature type="strand" evidence="3">
    <location>
        <begin position="24"/>
        <end position="27"/>
    </location>
</feature>
<feature type="strand" evidence="3">
    <location>
        <begin position="29"/>
        <end position="31"/>
    </location>
</feature>
<feature type="strand" evidence="3">
    <location>
        <begin position="39"/>
        <end position="47"/>
    </location>
</feature>
<feature type="strand" evidence="3">
    <location>
        <begin position="57"/>
        <end position="62"/>
    </location>
</feature>
<feature type="strand" evidence="3">
    <location>
        <begin position="68"/>
        <end position="73"/>
    </location>
</feature>
<feature type="turn" evidence="3">
    <location>
        <begin position="74"/>
        <end position="76"/>
    </location>
</feature>
<feature type="strand" evidence="3">
    <location>
        <begin position="86"/>
        <end position="90"/>
    </location>
</feature>
<feature type="strand" evidence="3">
    <location>
        <begin position="92"/>
        <end position="101"/>
    </location>
</feature>
<feature type="strand" evidence="3">
    <location>
        <begin position="108"/>
        <end position="114"/>
    </location>
</feature>
<feature type="strand" evidence="3">
    <location>
        <begin position="116"/>
        <end position="119"/>
    </location>
</feature>
<feature type="strand" evidence="3">
    <location>
        <begin position="126"/>
        <end position="128"/>
    </location>
</feature>
<reference key="1">
    <citation type="journal article" date="1978" name="Biochemistry">
        <title>Primary structures of N-terminal extra peptide segments linked to the variable and constant regions of immunoglobulin light chain precursors: implications on the organization and controlled expression of immunoglobulin genes.</title>
        <authorList>
            <person name="Burstein Y."/>
            <person name="Schechter I."/>
        </authorList>
    </citation>
    <scope>PROTEIN SEQUENCE OF 1-35 (PRECURSOR PROTEIN)</scope>
</reference>
<reference key="2">
    <citation type="journal article" date="1973" name="Biochemistry">
        <title>Mouse immunoglobulin chains. Pattern of sequence variation among kappa chains with limited sequence differences.</title>
        <authorList>
            <person name="McKean D.J."/>
            <person name="Potter M."/>
            <person name="Hood L.E."/>
        </authorList>
    </citation>
    <scope>PROTEIN SEQUENCE OF 21-131</scope>
</reference>
<reference key="3">
    <citation type="journal article" date="1978" name="Proc. Natl. Acad. Sci. U.S.A.">
        <title>Mechanisms of antibody diversity: multiple genes encode structurally related mouse kappa variable regions.</title>
        <authorList>
            <person name="McKean D.J."/>
            <person name="Bell M."/>
            <person name="Potter M."/>
        </authorList>
    </citation>
    <scope>SEQUENCE REVISION</scope>
</reference>
<evidence type="ECO:0000255" key="1">
    <source>
        <dbReference type="PROSITE-ProRule" id="PRU00114"/>
    </source>
</evidence>
<evidence type="ECO:0000269" key="2">
    <source>
    </source>
</evidence>
<evidence type="ECO:0007829" key="3">
    <source>
        <dbReference type="PDB" id="1EGJ"/>
    </source>
</evidence>
<sequence>METDTLLLWVLLLWVPGSTGNIVLTQSPASLAVSLGQRATISCRASESVDSYGNSFMHWYQQKPGQPPKLLIYLASNLESGVPARFSGSGSRTDFTLTIDPVEADDAATYYCQQNNEDPWTFGGGTKLEIK</sequence>
<protein>
    <recommendedName>
        <fullName>Ig kappa chain V-III region MOPC 63</fullName>
    </recommendedName>
</protein>
<proteinExistence type="evidence at protein level"/>
<dbReference type="PIR" id="B90412">
    <property type="entry name" value="KVMSM6"/>
</dbReference>
<dbReference type="PIR" id="D45722">
    <property type="entry name" value="D45722"/>
</dbReference>
<dbReference type="PDB" id="1EGJ">
    <property type="method" value="X-ray"/>
    <property type="resolution" value="2.80 A"/>
    <property type="chains" value="L=21-131"/>
</dbReference>
<dbReference type="PDBsum" id="1EGJ"/>
<dbReference type="SMR" id="P01661"/>
<dbReference type="FunCoup" id="P01661">
    <property type="interactions" value="789"/>
</dbReference>
<dbReference type="PeptideAtlas" id="P01661"/>
<dbReference type="InParanoid" id="P01661"/>
<dbReference type="PhylomeDB" id="P01661"/>
<dbReference type="EvolutionaryTrace" id="P01661"/>
<dbReference type="Proteomes" id="UP000000589">
    <property type="component" value="Unplaced"/>
</dbReference>
<dbReference type="RNAct" id="P01661">
    <property type="molecule type" value="protein"/>
</dbReference>
<dbReference type="GO" id="GO:0019814">
    <property type="term" value="C:immunoglobulin complex"/>
    <property type="evidence" value="ECO:0000318"/>
    <property type="project" value="GO_Central"/>
</dbReference>
<dbReference type="GO" id="GO:0002250">
    <property type="term" value="P:adaptive immune response"/>
    <property type="evidence" value="ECO:0007669"/>
    <property type="project" value="UniProtKB-KW"/>
</dbReference>
<dbReference type="GO" id="GO:0006955">
    <property type="term" value="P:immune response"/>
    <property type="evidence" value="ECO:0000318"/>
    <property type="project" value="GO_Central"/>
</dbReference>
<dbReference type="CDD" id="cd04980">
    <property type="entry name" value="IgV_L_kappa"/>
    <property type="match status" value="1"/>
</dbReference>
<dbReference type="FunFam" id="2.60.40.10:FF:000350">
    <property type="entry name" value="Immunoglobulin kappa chain variable 18-36"/>
    <property type="match status" value="1"/>
</dbReference>
<dbReference type="Gene3D" id="2.60.40.10">
    <property type="entry name" value="Immunoglobulins"/>
    <property type="match status" value="1"/>
</dbReference>
<dbReference type="InterPro" id="IPR007110">
    <property type="entry name" value="Ig-like_dom"/>
</dbReference>
<dbReference type="InterPro" id="IPR036179">
    <property type="entry name" value="Ig-like_dom_sf"/>
</dbReference>
<dbReference type="InterPro" id="IPR013783">
    <property type="entry name" value="Ig-like_fold"/>
</dbReference>
<dbReference type="InterPro" id="IPR003599">
    <property type="entry name" value="Ig_sub"/>
</dbReference>
<dbReference type="InterPro" id="IPR013106">
    <property type="entry name" value="Ig_V-set"/>
</dbReference>
<dbReference type="InterPro" id="IPR050150">
    <property type="entry name" value="IgV_Light_Chain"/>
</dbReference>
<dbReference type="PANTHER" id="PTHR23267">
    <property type="entry name" value="IMMUNOGLOBULIN LIGHT CHAIN"/>
    <property type="match status" value="1"/>
</dbReference>
<dbReference type="Pfam" id="PF07686">
    <property type="entry name" value="V-set"/>
    <property type="match status" value="1"/>
</dbReference>
<dbReference type="SMART" id="SM00409">
    <property type="entry name" value="IG"/>
    <property type="match status" value="1"/>
</dbReference>
<dbReference type="SMART" id="SM00406">
    <property type="entry name" value="IGv"/>
    <property type="match status" value="1"/>
</dbReference>
<dbReference type="SUPFAM" id="SSF48726">
    <property type="entry name" value="Immunoglobulin"/>
    <property type="match status" value="1"/>
</dbReference>
<dbReference type="PROSITE" id="PS50835">
    <property type="entry name" value="IG_LIKE"/>
    <property type="match status" value="1"/>
</dbReference>
<accession>P01661</accession>